<protein>
    <recommendedName>
        <fullName>Neurotoxin LmNaTx11.1</fullName>
    </recommendedName>
</protein>
<comment type="function">
    <text evidence="1">Binds voltage-independently at site-4 of sodium channels (Nav) and shift the voltage of activation toward more negative potentials thereby affecting sodium channel activation and promoting spontaneous and repetitive firing.</text>
</comment>
<comment type="subcellular location">
    <subcellularLocation>
        <location evidence="1">Secreted</location>
    </subcellularLocation>
</comment>
<comment type="tissue specificity">
    <text>Expressed by the venom gland.</text>
</comment>
<comment type="domain">
    <text evidence="4">Has the structural arrangement of an alpha-helix connected to antiparallel beta-sheets by disulfide bonds (CS-alpha/beta).</text>
</comment>
<comment type="similarity">
    <text evidence="4">Belongs to the long (4 C-C) scorpion toxin superfamily. Sodium channel inhibitor family. Beta subfamily.</text>
</comment>
<keyword id="KW-1015">Disulfide bond</keyword>
<keyword id="KW-0872">Ion channel impairing toxin</keyword>
<keyword id="KW-0528">Neurotoxin</keyword>
<keyword id="KW-0964">Secreted</keyword>
<keyword id="KW-0732">Signal</keyword>
<keyword id="KW-0800">Toxin</keyword>
<keyword id="KW-0738">Voltage-gated sodium channel impairing toxin</keyword>
<sequence length="81" mass="8955">MKIVIIFFIAMMAVGVYSKDGYLVKKNGCKYDCTPLFGDSNCNGECKAFKASWGSCYWFACYCRGLPDSVPTYPSSKTCSS</sequence>
<feature type="signal peptide" evidence="2">
    <location>
        <begin position="1"/>
        <end position="18"/>
    </location>
</feature>
<feature type="chain" id="PRO_0000403816" description="Neurotoxin LmNaTx11.1">
    <location>
        <begin position="19"/>
        <end position="81"/>
    </location>
</feature>
<feature type="domain" description="LCN-type CS-alpha/beta" evidence="3">
    <location>
        <begin position="19"/>
        <end position="80"/>
    </location>
</feature>
<feature type="disulfide bond" evidence="3">
    <location>
        <begin position="29"/>
        <end position="79"/>
    </location>
</feature>
<feature type="disulfide bond" evidence="3">
    <location>
        <begin position="33"/>
        <end position="56"/>
    </location>
</feature>
<feature type="disulfide bond" evidence="3">
    <location>
        <begin position="42"/>
        <end position="61"/>
    </location>
</feature>
<feature type="disulfide bond" evidence="3">
    <location>
        <begin position="46"/>
        <end position="63"/>
    </location>
</feature>
<proteinExistence type="evidence at transcript level"/>
<organism>
    <name type="scientific">Lychas mucronatus</name>
    <name type="common">Chinese swimming scorpion</name>
    <dbReference type="NCBI Taxonomy" id="172552"/>
    <lineage>
        <taxon>Eukaryota</taxon>
        <taxon>Metazoa</taxon>
        <taxon>Ecdysozoa</taxon>
        <taxon>Arthropoda</taxon>
        <taxon>Chelicerata</taxon>
        <taxon>Arachnida</taxon>
        <taxon>Scorpiones</taxon>
        <taxon>Buthida</taxon>
        <taxon>Buthoidea</taxon>
        <taxon>Buthidae</taxon>
        <taxon>Lychas</taxon>
    </lineage>
</organism>
<name>SNAB_LYCMC</name>
<evidence type="ECO:0000250" key="1"/>
<evidence type="ECO:0000255" key="2"/>
<evidence type="ECO:0000255" key="3">
    <source>
        <dbReference type="PROSITE-ProRule" id="PRU01210"/>
    </source>
</evidence>
<evidence type="ECO:0000305" key="4"/>
<reference key="1">
    <citation type="journal article" date="2010" name="BMC Genomics">
        <title>Comparative venom gland transcriptome analysis of the scorpion Lychas mucronatus reveals intraspecific toxic gene diversity and new venomous components.</title>
        <authorList>
            <person name="Zhao R."/>
            <person name="Ma Y."/>
            <person name="He Y."/>
            <person name="Di Z."/>
            <person name="Wu Y.-L."/>
            <person name="Cao Z.-J."/>
            <person name="Li W.-X."/>
        </authorList>
    </citation>
    <scope>NUCLEOTIDE SEQUENCE [MRNA]</scope>
    <source>
        <strain>Yunnan</strain>
        <tissue>Venom gland</tissue>
    </source>
</reference>
<accession>P0CI56</accession>
<dbReference type="EMBL" id="GT028621">
    <property type="status" value="NOT_ANNOTATED_CDS"/>
    <property type="molecule type" value="mRNA"/>
</dbReference>
<dbReference type="SMR" id="P0CI56"/>
<dbReference type="GO" id="GO:0005576">
    <property type="term" value="C:extracellular region"/>
    <property type="evidence" value="ECO:0007669"/>
    <property type="project" value="UniProtKB-SubCell"/>
</dbReference>
<dbReference type="GO" id="GO:0019871">
    <property type="term" value="F:sodium channel inhibitor activity"/>
    <property type="evidence" value="ECO:0007669"/>
    <property type="project" value="InterPro"/>
</dbReference>
<dbReference type="GO" id="GO:0090729">
    <property type="term" value="F:toxin activity"/>
    <property type="evidence" value="ECO:0007669"/>
    <property type="project" value="UniProtKB-KW"/>
</dbReference>
<dbReference type="GO" id="GO:0006952">
    <property type="term" value="P:defense response"/>
    <property type="evidence" value="ECO:0007669"/>
    <property type="project" value="InterPro"/>
</dbReference>
<dbReference type="CDD" id="cd23106">
    <property type="entry name" value="neurotoxins_LC_scorpion"/>
    <property type="match status" value="1"/>
</dbReference>
<dbReference type="Gene3D" id="3.30.30.10">
    <property type="entry name" value="Knottin, scorpion toxin-like"/>
    <property type="match status" value="1"/>
</dbReference>
<dbReference type="InterPro" id="IPR044062">
    <property type="entry name" value="LCN-type_CS_alpha_beta_dom"/>
</dbReference>
<dbReference type="InterPro" id="IPR003614">
    <property type="entry name" value="Scorpion_toxin-like"/>
</dbReference>
<dbReference type="InterPro" id="IPR036574">
    <property type="entry name" value="Scorpion_toxin-like_sf"/>
</dbReference>
<dbReference type="InterPro" id="IPR018218">
    <property type="entry name" value="Scorpion_toxinL"/>
</dbReference>
<dbReference type="InterPro" id="IPR002061">
    <property type="entry name" value="Scorpion_toxinL/defensin"/>
</dbReference>
<dbReference type="Pfam" id="PF00537">
    <property type="entry name" value="Toxin_3"/>
    <property type="match status" value="1"/>
</dbReference>
<dbReference type="PRINTS" id="PR00285">
    <property type="entry name" value="SCORPNTOXIN"/>
</dbReference>
<dbReference type="SMART" id="SM00505">
    <property type="entry name" value="Knot1"/>
    <property type="match status" value="1"/>
</dbReference>
<dbReference type="SUPFAM" id="SSF57095">
    <property type="entry name" value="Scorpion toxin-like"/>
    <property type="match status" value="1"/>
</dbReference>
<dbReference type="PROSITE" id="PS51863">
    <property type="entry name" value="LCN_CSAB"/>
    <property type="match status" value="1"/>
</dbReference>